<sequence>MKLNDLRDKPGSVKARKRVGRGIGSGTGKTGGRGVKGQKSRSGVSINGFEGGQMPIYRRLPKRGFTNIFAKSFNVVSLGRIQAAIDAGKLDAKAVVNLDSLKAAGVIRRAKDGVRILSDGELKAKVAFEVAGASKAAVEKIEKAGGSIKLPEAAAE</sequence>
<name>RL15_BRUME</name>
<evidence type="ECO:0000255" key="1">
    <source>
        <dbReference type="HAMAP-Rule" id="MF_01341"/>
    </source>
</evidence>
<evidence type="ECO:0000256" key="2">
    <source>
        <dbReference type="SAM" id="MobiDB-lite"/>
    </source>
</evidence>
<evidence type="ECO:0000305" key="3"/>
<dbReference type="EMBL" id="AE008917">
    <property type="protein sequence ID" value="AAL51957.1"/>
    <property type="molecule type" value="Genomic_DNA"/>
</dbReference>
<dbReference type="PIR" id="AB3349">
    <property type="entry name" value="AB3349"/>
</dbReference>
<dbReference type="RefSeq" id="WP_002964343.1">
    <property type="nucleotide sequence ID" value="NZ_GG703780.1"/>
</dbReference>
<dbReference type="SMR" id="Q8YHM1"/>
<dbReference type="GeneID" id="97533543"/>
<dbReference type="KEGG" id="bme:BMEI0776"/>
<dbReference type="KEGG" id="bmel:DK63_646"/>
<dbReference type="PATRIC" id="fig|224914.52.peg.677"/>
<dbReference type="eggNOG" id="COG0200">
    <property type="taxonomic scope" value="Bacteria"/>
</dbReference>
<dbReference type="PhylomeDB" id="Q8YHM1"/>
<dbReference type="Proteomes" id="UP000000419">
    <property type="component" value="Chromosome I"/>
</dbReference>
<dbReference type="GO" id="GO:0022625">
    <property type="term" value="C:cytosolic large ribosomal subunit"/>
    <property type="evidence" value="ECO:0007669"/>
    <property type="project" value="TreeGrafter"/>
</dbReference>
<dbReference type="GO" id="GO:0019843">
    <property type="term" value="F:rRNA binding"/>
    <property type="evidence" value="ECO:0007669"/>
    <property type="project" value="UniProtKB-UniRule"/>
</dbReference>
<dbReference type="GO" id="GO:0003735">
    <property type="term" value="F:structural constituent of ribosome"/>
    <property type="evidence" value="ECO:0007669"/>
    <property type="project" value="InterPro"/>
</dbReference>
<dbReference type="GO" id="GO:0006412">
    <property type="term" value="P:translation"/>
    <property type="evidence" value="ECO:0007669"/>
    <property type="project" value="UniProtKB-UniRule"/>
</dbReference>
<dbReference type="Gene3D" id="3.100.10.10">
    <property type="match status" value="1"/>
</dbReference>
<dbReference type="HAMAP" id="MF_01341">
    <property type="entry name" value="Ribosomal_uL15"/>
    <property type="match status" value="1"/>
</dbReference>
<dbReference type="InterPro" id="IPR030878">
    <property type="entry name" value="Ribosomal_uL15"/>
</dbReference>
<dbReference type="InterPro" id="IPR021131">
    <property type="entry name" value="Ribosomal_uL15/eL18"/>
</dbReference>
<dbReference type="InterPro" id="IPR036227">
    <property type="entry name" value="Ribosomal_uL15/eL18_sf"/>
</dbReference>
<dbReference type="InterPro" id="IPR005749">
    <property type="entry name" value="Ribosomal_uL15_bac-type"/>
</dbReference>
<dbReference type="InterPro" id="IPR001196">
    <property type="entry name" value="Ribosomal_uL15_CS"/>
</dbReference>
<dbReference type="NCBIfam" id="TIGR01071">
    <property type="entry name" value="rplO_bact"/>
    <property type="match status" value="1"/>
</dbReference>
<dbReference type="PANTHER" id="PTHR12934">
    <property type="entry name" value="50S RIBOSOMAL PROTEIN L15"/>
    <property type="match status" value="1"/>
</dbReference>
<dbReference type="PANTHER" id="PTHR12934:SF11">
    <property type="entry name" value="LARGE RIBOSOMAL SUBUNIT PROTEIN UL15M"/>
    <property type="match status" value="1"/>
</dbReference>
<dbReference type="Pfam" id="PF00828">
    <property type="entry name" value="Ribosomal_L27A"/>
    <property type="match status" value="1"/>
</dbReference>
<dbReference type="SUPFAM" id="SSF52080">
    <property type="entry name" value="Ribosomal proteins L15p and L18e"/>
    <property type="match status" value="1"/>
</dbReference>
<dbReference type="PROSITE" id="PS00475">
    <property type="entry name" value="RIBOSOMAL_L15"/>
    <property type="match status" value="1"/>
</dbReference>
<organism>
    <name type="scientific">Brucella melitensis biotype 1 (strain ATCC 23456 / CCUG 17765 / NCTC 10094 / 16M)</name>
    <dbReference type="NCBI Taxonomy" id="224914"/>
    <lineage>
        <taxon>Bacteria</taxon>
        <taxon>Pseudomonadati</taxon>
        <taxon>Pseudomonadota</taxon>
        <taxon>Alphaproteobacteria</taxon>
        <taxon>Hyphomicrobiales</taxon>
        <taxon>Brucellaceae</taxon>
        <taxon>Brucella/Ochrobactrum group</taxon>
        <taxon>Brucella</taxon>
    </lineage>
</organism>
<gene>
    <name evidence="1" type="primary">rplO</name>
    <name type="ordered locus">BMEI0776</name>
</gene>
<reference key="1">
    <citation type="journal article" date="2002" name="Proc. Natl. Acad. Sci. U.S.A.">
        <title>The genome sequence of the facultative intracellular pathogen Brucella melitensis.</title>
        <authorList>
            <person name="DelVecchio V.G."/>
            <person name="Kapatral V."/>
            <person name="Redkar R.J."/>
            <person name="Patra G."/>
            <person name="Mujer C."/>
            <person name="Los T."/>
            <person name="Ivanova N."/>
            <person name="Anderson I."/>
            <person name="Bhattacharyya A."/>
            <person name="Lykidis A."/>
            <person name="Reznik G."/>
            <person name="Jablonski L."/>
            <person name="Larsen N."/>
            <person name="D'Souza M."/>
            <person name="Bernal A."/>
            <person name="Mazur M."/>
            <person name="Goltsman E."/>
            <person name="Selkov E."/>
            <person name="Elzer P.H."/>
            <person name="Hagius S."/>
            <person name="O'Callaghan D."/>
            <person name="Letesson J.-J."/>
            <person name="Haselkorn R."/>
            <person name="Kyrpides N.C."/>
            <person name="Overbeek R."/>
        </authorList>
    </citation>
    <scope>NUCLEOTIDE SEQUENCE [LARGE SCALE GENOMIC DNA]</scope>
    <source>
        <strain>ATCC 23456 / CCUG 17765 / NCTC 10094 / 16M</strain>
    </source>
</reference>
<keyword id="KW-0687">Ribonucleoprotein</keyword>
<keyword id="KW-0689">Ribosomal protein</keyword>
<keyword id="KW-0694">RNA-binding</keyword>
<keyword id="KW-0699">rRNA-binding</keyword>
<protein>
    <recommendedName>
        <fullName evidence="1">Large ribosomal subunit protein uL15</fullName>
    </recommendedName>
    <alternativeName>
        <fullName evidence="3">50S ribosomal protein L15</fullName>
    </alternativeName>
</protein>
<proteinExistence type="inferred from homology"/>
<feature type="chain" id="PRO_0000104691" description="Large ribosomal subunit protein uL15">
    <location>
        <begin position="1"/>
        <end position="156"/>
    </location>
</feature>
<feature type="region of interest" description="Disordered" evidence="2">
    <location>
        <begin position="1"/>
        <end position="44"/>
    </location>
</feature>
<feature type="compositionally biased region" description="Basic and acidic residues" evidence="2">
    <location>
        <begin position="1"/>
        <end position="11"/>
    </location>
</feature>
<feature type="compositionally biased region" description="Gly residues" evidence="2">
    <location>
        <begin position="21"/>
        <end position="35"/>
    </location>
</feature>
<comment type="function">
    <text evidence="1">Binds to the 23S rRNA.</text>
</comment>
<comment type="subunit">
    <text evidence="1">Part of the 50S ribosomal subunit.</text>
</comment>
<comment type="similarity">
    <text evidence="1">Belongs to the universal ribosomal protein uL15 family.</text>
</comment>
<accession>Q8YHM1</accession>